<accession>Q7WK44</accession>
<comment type="function">
    <text evidence="2">Peptide chain release factor 2 directs the termination of translation in response to the peptide chain termination codons UGA and UAA.</text>
</comment>
<comment type="subcellular location">
    <subcellularLocation>
        <location evidence="2">Cytoplasm</location>
    </subcellularLocation>
</comment>
<comment type="PTM">
    <text evidence="2">Methylated by PrmC. Methylation increases the termination efficiency of RF2.</text>
</comment>
<comment type="miscellaneous">
    <text evidence="1">The gene for this protein contains a UGA in-frame termination codon after Leu-27; a naturally occurring frameshift enables complete translation of RF-2. This provides a mechanism for the protein to regulate its own production (By similarity).</text>
</comment>
<comment type="similarity">
    <text evidence="2">Belongs to the prokaryotic/mitochondrial release factor family.</text>
</comment>
<reference key="1">
    <citation type="journal article" date="2003" name="Nat. Genet.">
        <title>Comparative analysis of the genome sequences of Bordetella pertussis, Bordetella parapertussis and Bordetella bronchiseptica.</title>
        <authorList>
            <person name="Parkhill J."/>
            <person name="Sebaihia M."/>
            <person name="Preston A."/>
            <person name="Murphy L.D."/>
            <person name="Thomson N.R."/>
            <person name="Harris D.E."/>
            <person name="Holden M.T.G."/>
            <person name="Churcher C.M."/>
            <person name="Bentley S.D."/>
            <person name="Mungall K.L."/>
            <person name="Cerdeno-Tarraga A.-M."/>
            <person name="Temple L."/>
            <person name="James K.D."/>
            <person name="Harris B."/>
            <person name="Quail M.A."/>
            <person name="Achtman M."/>
            <person name="Atkin R."/>
            <person name="Baker S."/>
            <person name="Basham D."/>
            <person name="Bason N."/>
            <person name="Cherevach I."/>
            <person name="Chillingworth T."/>
            <person name="Collins M."/>
            <person name="Cronin A."/>
            <person name="Davis P."/>
            <person name="Doggett J."/>
            <person name="Feltwell T."/>
            <person name="Goble A."/>
            <person name="Hamlin N."/>
            <person name="Hauser H."/>
            <person name="Holroyd S."/>
            <person name="Jagels K."/>
            <person name="Leather S."/>
            <person name="Moule S."/>
            <person name="Norberczak H."/>
            <person name="O'Neil S."/>
            <person name="Ormond D."/>
            <person name="Price C."/>
            <person name="Rabbinowitsch E."/>
            <person name="Rutter S."/>
            <person name="Sanders M."/>
            <person name="Saunders D."/>
            <person name="Seeger K."/>
            <person name="Sharp S."/>
            <person name="Simmonds M."/>
            <person name="Skelton J."/>
            <person name="Squares R."/>
            <person name="Squares S."/>
            <person name="Stevens K."/>
            <person name="Unwin L."/>
            <person name="Whitehead S."/>
            <person name="Barrell B.G."/>
            <person name="Maskell D.J."/>
        </authorList>
    </citation>
    <scope>NUCLEOTIDE SEQUENCE [LARGE SCALE GENOMIC DNA]</scope>
    <source>
        <strain>ATCC BAA-588 / NCTC 13252 / RB50</strain>
    </source>
</reference>
<organism>
    <name type="scientific">Bordetella bronchiseptica (strain ATCC BAA-588 / NCTC 13252 / RB50)</name>
    <name type="common">Alcaligenes bronchisepticus</name>
    <dbReference type="NCBI Taxonomy" id="257310"/>
    <lineage>
        <taxon>Bacteria</taxon>
        <taxon>Pseudomonadati</taxon>
        <taxon>Pseudomonadota</taxon>
        <taxon>Betaproteobacteria</taxon>
        <taxon>Burkholderiales</taxon>
        <taxon>Alcaligenaceae</taxon>
        <taxon>Bordetella</taxon>
    </lineage>
</organism>
<keyword id="KW-0963">Cytoplasm</keyword>
<keyword id="KW-0488">Methylation</keyword>
<keyword id="KW-0648">Protein biosynthesis</keyword>
<keyword id="KW-0688">Ribosomal frameshifting</keyword>
<protein>
    <recommendedName>
        <fullName evidence="2">Peptide chain release factor 2</fullName>
        <shortName evidence="2">RF-2</shortName>
    </recommendedName>
</protein>
<proteinExistence type="inferred from homology"/>
<dbReference type="EMBL" id="BX640443">
    <property type="protein sequence ID" value="CAE32791.1"/>
    <property type="molecule type" value="Genomic_DNA"/>
</dbReference>
<dbReference type="RefSeq" id="WP_010926448.1">
    <property type="nucleotide sequence ID" value="NC_002927.3"/>
</dbReference>
<dbReference type="SMR" id="Q7WK44"/>
<dbReference type="GeneID" id="69601026"/>
<dbReference type="KEGG" id="bbr:BB2295"/>
<dbReference type="eggNOG" id="COG1186">
    <property type="taxonomic scope" value="Bacteria"/>
</dbReference>
<dbReference type="HOGENOM" id="CLU_220733_0_1_4"/>
<dbReference type="Proteomes" id="UP000001027">
    <property type="component" value="Chromosome"/>
</dbReference>
<dbReference type="GO" id="GO:0005737">
    <property type="term" value="C:cytoplasm"/>
    <property type="evidence" value="ECO:0007669"/>
    <property type="project" value="UniProtKB-SubCell"/>
</dbReference>
<dbReference type="GO" id="GO:0016149">
    <property type="term" value="F:translation release factor activity, codon specific"/>
    <property type="evidence" value="ECO:0007669"/>
    <property type="project" value="UniProtKB-UniRule"/>
</dbReference>
<dbReference type="GO" id="GO:0075523">
    <property type="term" value="P:viral translational frameshifting"/>
    <property type="evidence" value="ECO:0007669"/>
    <property type="project" value="UniProtKB-KW"/>
</dbReference>
<dbReference type="FunFam" id="3.30.160.20:FF:000010">
    <property type="entry name" value="Peptide chain release factor 2"/>
    <property type="match status" value="1"/>
</dbReference>
<dbReference type="Gene3D" id="3.30.160.20">
    <property type="match status" value="1"/>
</dbReference>
<dbReference type="Gene3D" id="3.30.70.1660">
    <property type="match status" value="1"/>
</dbReference>
<dbReference type="Gene3D" id="1.20.58.410">
    <property type="entry name" value="Release factor"/>
    <property type="match status" value="1"/>
</dbReference>
<dbReference type="HAMAP" id="MF_00094">
    <property type="entry name" value="Rel_fac_2"/>
    <property type="match status" value="1"/>
</dbReference>
<dbReference type="InterPro" id="IPR005139">
    <property type="entry name" value="PCRF"/>
</dbReference>
<dbReference type="InterPro" id="IPR000352">
    <property type="entry name" value="Pep_chain_release_fac_I"/>
</dbReference>
<dbReference type="InterPro" id="IPR045853">
    <property type="entry name" value="Pep_chain_release_fac_I_sf"/>
</dbReference>
<dbReference type="InterPro" id="IPR004374">
    <property type="entry name" value="PrfB"/>
</dbReference>
<dbReference type="NCBIfam" id="TIGR00020">
    <property type="entry name" value="prfB"/>
    <property type="match status" value="1"/>
</dbReference>
<dbReference type="PANTHER" id="PTHR43116:SF3">
    <property type="entry name" value="CLASS I PEPTIDE CHAIN RELEASE FACTOR"/>
    <property type="match status" value="1"/>
</dbReference>
<dbReference type="PANTHER" id="PTHR43116">
    <property type="entry name" value="PEPTIDE CHAIN RELEASE FACTOR 2"/>
    <property type="match status" value="1"/>
</dbReference>
<dbReference type="Pfam" id="PF03462">
    <property type="entry name" value="PCRF"/>
    <property type="match status" value="1"/>
</dbReference>
<dbReference type="Pfam" id="PF00472">
    <property type="entry name" value="RF-1"/>
    <property type="match status" value="1"/>
</dbReference>
<dbReference type="SMART" id="SM00937">
    <property type="entry name" value="PCRF"/>
    <property type="match status" value="1"/>
</dbReference>
<dbReference type="SUPFAM" id="SSF75620">
    <property type="entry name" value="Release factor"/>
    <property type="match status" value="1"/>
</dbReference>
<dbReference type="PROSITE" id="PS00745">
    <property type="entry name" value="RF_PROK_I"/>
    <property type="match status" value="1"/>
</dbReference>
<feature type="chain" id="PRO_1000004973" description="Peptide chain release factor 2">
    <location>
        <begin position="1"/>
        <end position="367"/>
    </location>
</feature>
<feature type="modified residue" description="N5-methylglutamine" evidence="2">
    <location>
        <position position="254"/>
    </location>
</feature>
<name>RF2_BORBR</name>
<evidence type="ECO:0000250" key="1"/>
<evidence type="ECO:0000255" key="2">
    <source>
        <dbReference type="HAMAP-Rule" id="MF_00094"/>
    </source>
</evidence>
<gene>
    <name evidence="2" type="primary">prfB</name>
    <name type="ordered locus">BB2295</name>
</gene>
<sequence>MEAERQNQLVARLEDYAEREQALRRYLDYDAKSERLQVVNAELEDPAIWNDPKHAQDLGREKKSLEDVVETLTELGSGLADSCELVELALADSDDATLEAIEHDADRFQEKLETLEFRRMFANPADPLNCFVDIQAGAGGTEAQDWASMLLRQYLKYAERKGFKAEILEESEGDVAGLKSATIKIEGEYAFGYLRTETGVHRLVRKSPFDSSGGRHTSFASVFVYPEVDESFEVEVNPADLRIDTYRASGAGGQHINKTDSAVRITHAPSGIVVQCQNDRSQHRNRAEAMQMLKSKLYELEMRNRMTEQQKLEDSKTDVGWGHQIRSYVLDQSRIKDLRTNVEISNTQKVLDGDLDPFIQASLKQGV</sequence>